<protein>
    <recommendedName>
        <fullName>Inner kinetochore subunit cnp3</fullName>
    </recommendedName>
    <alternativeName>
        <fullName>CENP-C homolog</fullName>
    </alternativeName>
    <alternativeName>
        <fullName>Centromere protein 3</fullName>
    </alternativeName>
    <alternativeName>
        <fullName>Constitutive centromere-associated network protein cnp3</fullName>
    </alternativeName>
</protein>
<sequence length="643" mass="72052">MTMNETSAIPARQRENQFFEIGVVGRKTGFTVPRDVKKGDDGFEDMDAYFLSDGSIHLDEDNGDIEQDMPPVTRLQPTSPMAVNAASDEASHASSSDSSDKNPDIPSSPLLMNSRALRASRGSSGPLIVPIDHSAFQAEDEGTADKTKVDGNKLSIQPRKANRIVDFSRIKASPDRKKFEPRRSTELPSKIPSSTPKDDNVQESPAFPDENITALQKNVANFTSIKDSGGRDNLYIQTISKPRRSYVQNNKSEQTIKPSKQNKQKEEKKTISQGNKPNSRDEDSELSIDVPLSMLNRSLANNSQKNKKRTPNKPLQESSINSVKEGESNPVVKRKRGRPRKNKLEIGNSVQTSEATQVKGAKKPAIRNAKKMSNEKDDSLNSQSDSASGEFIKTIARNNLQEIKQVEREDTLVGVRRSKRTRIAPLAFWKNERVVYELHRDENRIPALPEVKQIIRVDDPSPSIRQGRKKRHAKRSGVEIKSNLEAKSNDVEEYDAFYKDEINCEVLSWNEQNPKASEERVVGYSLPSVNLQQISNQQLKFASLFKEEPSFAAGVVEMPAGAEKPVKPSKHNIMSFCILQGKIEVTVNATTFRMKKDGVFIVPRGNYYSIKNIGKEAVRLYYTHATDTLENKRRGIGDFPNER</sequence>
<dbReference type="EMBL" id="CU329671">
    <property type="protein sequence ID" value="CAB54977.2"/>
    <property type="molecule type" value="Genomic_DNA"/>
</dbReference>
<dbReference type="PIR" id="T39740">
    <property type="entry name" value="T39740"/>
</dbReference>
<dbReference type="PIR" id="T40544">
    <property type="entry name" value="T40544"/>
</dbReference>
<dbReference type="RefSeq" id="XP_001713151.1">
    <property type="nucleotide sequence ID" value="XM_001713099.2"/>
</dbReference>
<dbReference type="PDB" id="6O2D">
    <property type="method" value="X-ray"/>
    <property type="resolution" value="2.52 A"/>
    <property type="chains" value="A/B=489-643"/>
</dbReference>
<dbReference type="PDBsum" id="6O2D"/>
<dbReference type="SMR" id="Q9USR9"/>
<dbReference type="BioGRID" id="276178">
    <property type="interactions" value="10"/>
</dbReference>
<dbReference type="FunCoup" id="Q9USR9">
    <property type="interactions" value="1"/>
</dbReference>
<dbReference type="IntAct" id="Q9USR9">
    <property type="interactions" value="1"/>
</dbReference>
<dbReference type="STRING" id="284812.Q9USR9"/>
<dbReference type="iPTMnet" id="Q9USR9"/>
<dbReference type="PaxDb" id="4896-SPBC1861.01c.1"/>
<dbReference type="EnsemblFungi" id="SPBC1861.01c.1">
    <property type="protein sequence ID" value="SPBC1861.01c.1:pep"/>
    <property type="gene ID" value="SPBC1861.01c"/>
</dbReference>
<dbReference type="PomBase" id="SPBC1861.01c">
    <property type="gene designation" value="cnp3"/>
</dbReference>
<dbReference type="VEuPathDB" id="FungiDB:SPBC1861.01c"/>
<dbReference type="eggNOG" id="ENOG502S47H">
    <property type="taxonomic scope" value="Eukaryota"/>
</dbReference>
<dbReference type="HOGENOM" id="CLU_477476_0_0_1"/>
<dbReference type="InParanoid" id="Q9USR9"/>
<dbReference type="OMA" id="CHGRVQV"/>
<dbReference type="PRO" id="PR:Q9USR9"/>
<dbReference type="Proteomes" id="UP000002485">
    <property type="component" value="Chromosome II"/>
</dbReference>
<dbReference type="GO" id="GO:0000775">
    <property type="term" value="C:chromosome, centromeric region"/>
    <property type="evidence" value="ECO:0000314"/>
    <property type="project" value="PomBase"/>
</dbReference>
<dbReference type="GO" id="GO:0000779">
    <property type="term" value="C:condensed chromosome, centromeric region"/>
    <property type="evidence" value="ECO:0000314"/>
    <property type="project" value="PomBase"/>
</dbReference>
<dbReference type="GO" id="GO:0000776">
    <property type="term" value="C:kinetochore"/>
    <property type="evidence" value="ECO:0000314"/>
    <property type="project" value="PomBase"/>
</dbReference>
<dbReference type="GO" id="GO:0005730">
    <property type="term" value="C:nucleolus"/>
    <property type="evidence" value="ECO:0007005"/>
    <property type="project" value="PomBase"/>
</dbReference>
<dbReference type="GO" id="GO:0005654">
    <property type="term" value="C:nucleoplasm"/>
    <property type="evidence" value="ECO:0007669"/>
    <property type="project" value="UniProtKB-SubCell"/>
</dbReference>
<dbReference type="GO" id="GO:0005634">
    <property type="term" value="C:nucleus"/>
    <property type="evidence" value="ECO:0007005"/>
    <property type="project" value="PomBase"/>
</dbReference>
<dbReference type="GO" id="GO:0019237">
    <property type="term" value="F:centromeric DNA binding"/>
    <property type="evidence" value="ECO:0000314"/>
    <property type="project" value="PomBase"/>
</dbReference>
<dbReference type="GO" id="GO:0140483">
    <property type="term" value="F:kinetochore adaptor activity"/>
    <property type="evidence" value="ECO:0000353"/>
    <property type="project" value="PomBase"/>
</dbReference>
<dbReference type="GO" id="GO:0051315">
    <property type="term" value="P:attachment of mitotic spindle microtubules to kinetochore"/>
    <property type="evidence" value="ECO:0000315"/>
    <property type="project" value="PomBase"/>
</dbReference>
<dbReference type="GO" id="GO:0051382">
    <property type="term" value="P:kinetochore assembly"/>
    <property type="evidence" value="ECO:0000318"/>
    <property type="project" value="GO_Central"/>
</dbReference>
<dbReference type="GO" id="GO:0000070">
    <property type="term" value="P:mitotic sister chromatid segregation"/>
    <property type="evidence" value="ECO:0000315"/>
    <property type="project" value="PomBase"/>
</dbReference>
<dbReference type="GO" id="GO:0051455">
    <property type="term" value="P:spindle attachment to meiosis I kinetochore"/>
    <property type="evidence" value="ECO:0000315"/>
    <property type="project" value="PomBase"/>
</dbReference>
<dbReference type="CDD" id="cd06993">
    <property type="entry name" value="cupin_CENP-C_C"/>
    <property type="match status" value="1"/>
</dbReference>
<dbReference type="FunFam" id="2.60.120.10:FF:000033">
    <property type="entry name" value="Centromere protein C 1"/>
    <property type="match status" value="1"/>
</dbReference>
<dbReference type="Gene3D" id="2.60.120.10">
    <property type="entry name" value="Jelly Rolls"/>
    <property type="match status" value="1"/>
</dbReference>
<dbReference type="InterPro" id="IPR028386">
    <property type="entry name" value="CENP-C/Mif2/cnp3"/>
</dbReference>
<dbReference type="InterPro" id="IPR025974">
    <property type="entry name" value="Mif2/CENP-C_cupin"/>
</dbReference>
<dbReference type="InterPro" id="IPR014710">
    <property type="entry name" value="RmlC-like_jellyroll"/>
</dbReference>
<dbReference type="InterPro" id="IPR011051">
    <property type="entry name" value="RmlC_Cupin_sf"/>
</dbReference>
<dbReference type="PANTHER" id="PTHR16684">
    <property type="entry name" value="CENTROMERE PROTEIN C"/>
    <property type="match status" value="1"/>
</dbReference>
<dbReference type="PANTHER" id="PTHR16684:SF11">
    <property type="entry name" value="CENTROMERE PROTEIN C"/>
    <property type="match status" value="1"/>
</dbReference>
<dbReference type="Pfam" id="PF11699">
    <property type="entry name" value="CENP-C_C"/>
    <property type="match status" value="1"/>
</dbReference>
<dbReference type="SUPFAM" id="SSF51182">
    <property type="entry name" value="RmlC-like cupins"/>
    <property type="match status" value="1"/>
</dbReference>
<organism>
    <name type="scientific">Schizosaccharomyces pombe (strain 972 / ATCC 24843)</name>
    <name type="common">Fission yeast</name>
    <dbReference type="NCBI Taxonomy" id="284812"/>
    <lineage>
        <taxon>Eukaryota</taxon>
        <taxon>Fungi</taxon>
        <taxon>Dikarya</taxon>
        <taxon>Ascomycota</taxon>
        <taxon>Taphrinomycotina</taxon>
        <taxon>Schizosaccharomycetes</taxon>
        <taxon>Schizosaccharomycetales</taxon>
        <taxon>Schizosaccharomycetaceae</taxon>
        <taxon>Schizosaccharomyces</taxon>
    </lineage>
</organism>
<reference key="1">
    <citation type="journal article" date="2002" name="Nature">
        <title>The genome sequence of Schizosaccharomyces pombe.</title>
        <authorList>
            <person name="Wood V."/>
            <person name="Gwilliam R."/>
            <person name="Rajandream M.A."/>
            <person name="Lyne M.H."/>
            <person name="Lyne R."/>
            <person name="Stewart A."/>
            <person name="Sgouros J.G."/>
            <person name="Peat N."/>
            <person name="Hayles J."/>
            <person name="Baker S.G."/>
            <person name="Basham D."/>
            <person name="Bowman S."/>
            <person name="Brooks K."/>
            <person name="Brown D."/>
            <person name="Brown S."/>
            <person name="Chillingworth T."/>
            <person name="Churcher C.M."/>
            <person name="Collins M."/>
            <person name="Connor R."/>
            <person name="Cronin A."/>
            <person name="Davis P."/>
            <person name="Feltwell T."/>
            <person name="Fraser A."/>
            <person name="Gentles S."/>
            <person name="Goble A."/>
            <person name="Hamlin N."/>
            <person name="Harris D.E."/>
            <person name="Hidalgo J."/>
            <person name="Hodgson G."/>
            <person name="Holroyd S."/>
            <person name="Hornsby T."/>
            <person name="Howarth S."/>
            <person name="Huckle E.J."/>
            <person name="Hunt S."/>
            <person name="Jagels K."/>
            <person name="James K.D."/>
            <person name="Jones L."/>
            <person name="Jones M."/>
            <person name="Leather S."/>
            <person name="McDonald S."/>
            <person name="McLean J."/>
            <person name="Mooney P."/>
            <person name="Moule S."/>
            <person name="Mungall K.L."/>
            <person name="Murphy L.D."/>
            <person name="Niblett D."/>
            <person name="Odell C."/>
            <person name="Oliver K."/>
            <person name="O'Neil S."/>
            <person name="Pearson D."/>
            <person name="Quail M.A."/>
            <person name="Rabbinowitsch E."/>
            <person name="Rutherford K.M."/>
            <person name="Rutter S."/>
            <person name="Saunders D."/>
            <person name="Seeger K."/>
            <person name="Sharp S."/>
            <person name="Skelton J."/>
            <person name="Simmonds M.N."/>
            <person name="Squares R."/>
            <person name="Squares S."/>
            <person name="Stevens K."/>
            <person name="Taylor K."/>
            <person name="Taylor R.G."/>
            <person name="Tivey A."/>
            <person name="Walsh S.V."/>
            <person name="Warren T."/>
            <person name="Whitehead S."/>
            <person name="Woodward J.R."/>
            <person name="Volckaert G."/>
            <person name="Aert R."/>
            <person name="Robben J."/>
            <person name="Grymonprez B."/>
            <person name="Weltjens I."/>
            <person name="Vanstreels E."/>
            <person name="Rieger M."/>
            <person name="Schaefer M."/>
            <person name="Mueller-Auer S."/>
            <person name="Gabel C."/>
            <person name="Fuchs M."/>
            <person name="Duesterhoeft A."/>
            <person name="Fritzc C."/>
            <person name="Holzer E."/>
            <person name="Moestl D."/>
            <person name="Hilbert H."/>
            <person name="Borzym K."/>
            <person name="Langer I."/>
            <person name="Beck A."/>
            <person name="Lehrach H."/>
            <person name="Reinhardt R."/>
            <person name="Pohl T.M."/>
            <person name="Eger P."/>
            <person name="Zimmermann W."/>
            <person name="Wedler H."/>
            <person name="Wambutt R."/>
            <person name="Purnelle B."/>
            <person name="Goffeau A."/>
            <person name="Cadieu E."/>
            <person name="Dreano S."/>
            <person name="Gloux S."/>
            <person name="Lelaure V."/>
            <person name="Mottier S."/>
            <person name="Galibert F."/>
            <person name="Aves S.J."/>
            <person name="Xiang Z."/>
            <person name="Hunt C."/>
            <person name="Moore K."/>
            <person name="Hurst S.M."/>
            <person name="Lucas M."/>
            <person name="Rochet M."/>
            <person name="Gaillardin C."/>
            <person name="Tallada V.A."/>
            <person name="Garzon A."/>
            <person name="Thode G."/>
            <person name="Daga R.R."/>
            <person name="Cruzado L."/>
            <person name="Jimenez J."/>
            <person name="Sanchez M."/>
            <person name="del Rey F."/>
            <person name="Benito J."/>
            <person name="Dominguez A."/>
            <person name="Revuelta J.L."/>
            <person name="Moreno S."/>
            <person name="Armstrong J."/>
            <person name="Forsburg S.L."/>
            <person name="Cerutti L."/>
            <person name="Lowe T."/>
            <person name="McCombie W.R."/>
            <person name="Paulsen I."/>
            <person name="Potashkin J."/>
            <person name="Shpakovski G.V."/>
            <person name="Ussery D."/>
            <person name="Barrell B.G."/>
            <person name="Nurse P."/>
        </authorList>
    </citation>
    <scope>NUCLEOTIDE SEQUENCE [LARGE SCALE GENOMIC DNA]</scope>
    <source>
        <strain>972 / ATCC 24843</strain>
    </source>
</reference>
<reference key="2">
    <citation type="journal article" date="2005" name="Chromosome Res.">
        <title>Comparison of Dam tagging and chromatin immunoprecipitation as tools for the identification of the binding sites for S. pombe CENP-C.</title>
        <authorList>
            <person name="Holland S."/>
            <person name="Ioannou D."/>
            <person name="Haines S."/>
            <person name="Brown W.R."/>
        </authorList>
    </citation>
    <scope>FUNCTION</scope>
</reference>
<reference key="3">
    <citation type="journal article" date="2006" name="Nat. Biotechnol.">
        <title>ORFeome cloning and global analysis of protein localization in the fission yeast Schizosaccharomyces pombe.</title>
        <authorList>
            <person name="Matsuyama A."/>
            <person name="Arai R."/>
            <person name="Yashiroda Y."/>
            <person name="Shirai A."/>
            <person name="Kamata A."/>
            <person name="Sekido S."/>
            <person name="Kobayashi Y."/>
            <person name="Hashimoto A."/>
            <person name="Hamamoto M."/>
            <person name="Hiraoka Y."/>
            <person name="Horinouchi S."/>
            <person name="Yoshida M."/>
        </authorList>
    </citation>
    <scope>SUBCELLULAR LOCATION [LARGE SCALE ANALYSIS]</scope>
</reference>
<proteinExistence type="evidence at protein level"/>
<keyword id="KW-0002">3D-structure</keyword>
<keyword id="KW-0238">DNA-binding</keyword>
<keyword id="KW-0539">Nucleus</keyword>
<keyword id="KW-1185">Reference proteome</keyword>
<name>CENPC_SCHPO</name>
<accession>Q9USR9</accession>
<accession>Q9USY5</accession>
<evidence type="ECO:0000250" key="1">
    <source>
        <dbReference type="UniProtKB" id="P35201"/>
    </source>
</evidence>
<evidence type="ECO:0000256" key="2">
    <source>
        <dbReference type="SAM" id="MobiDB-lite"/>
    </source>
</evidence>
<evidence type="ECO:0000269" key="3">
    <source>
    </source>
</evidence>
<evidence type="ECO:0000269" key="4">
    <source>
    </source>
</evidence>
<evidence type="ECO:0000305" key="5"/>
<evidence type="ECO:0007829" key="6">
    <source>
        <dbReference type="PDB" id="6O2D"/>
    </source>
</evidence>
<comment type="function">
    <text evidence="3">Component of the kinetochore, a multiprotein complex that assembles on centromeric DNA and attaches chromosomes to spindle microtubules, mediating chromosome segregation and sister chromatid segregation during meiosis and mitosis. Component of the inner kinetochore constitutive centromere-associated network (CCAN), which serves as a structural platform for outer kinetochore assembly.</text>
</comment>
<comment type="subunit">
    <text evidence="1">Component of the inner kinetochore constitutive centromere-associated network (CCAN) (also known as central kinetochore Sim4 complex in fission yeast), which is composed of at least cnl2, cnp3, cnp20, fta1, fta2, fta3, fta4, fta6, fta7, mal2, mhf1, mhf2, mis6, mis15, mis17, sim4 and wip1.</text>
</comment>
<comment type="subcellular location">
    <subcellularLocation>
        <location evidence="4">Nucleus</location>
        <location evidence="4">Nucleoplasm</location>
    </subcellularLocation>
</comment>
<comment type="similarity">
    <text evidence="5">Belongs to the CENP-C/MIF2 family.</text>
</comment>
<gene>
    <name type="primary">cnp3</name>
    <name type="ORF">SPBC1861.01c</name>
    <name type="ORF">SPBC56F2.13</name>
</gene>
<feature type="chain" id="PRO_0000116879" description="Inner kinetochore subunit cnp3">
    <location>
        <begin position="1"/>
        <end position="643"/>
    </location>
</feature>
<feature type="DNA-binding region" description="A.T hook">
    <location>
        <begin position="333"/>
        <end position="345"/>
    </location>
</feature>
<feature type="region of interest" description="Disordered" evidence="2">
    <location>
        <begin position="55"/>
        <end position="209"/>
    </location>
</feature>
<feature type="region of interest" description="Disordered" evidence="2">
    <location>
        <begin position="224"/>
        <end position="386"/>
    </location>
</feature>
<feature type="compositionally biased region" description="Low complexity" evidence="2">
    <location>
        <begin position="85"/>
        <end position="97"/>
    </location>
</feature>
<feature type="compositionally biased region" description="Low complexity" evidence="2">
    <location>
        <begin position="104"/>
        <end position="125"/>
    </location>
</feature>
<feature type="compositionally biased region" description="Basic and acidic residues" evidence="2">
    <location>
        <begin position="166"/>
        <end position="185"/>
    </location>
</feature>
<feature type="compositionally biased region" description="Polar residues" evidence="2">
    <location>
        <begin position="235"/>
        <end position="261"/>
    </location>
</feature>
<feature type="compositionally biased region" description="Polar residues" evidence="2">
    <location>
        <begin position="295"/>
        <end position="304"/>
    </location>
</feature>
<feature type="compositionally biased region" description="Polar residues" evidence="2">
    <location>
        <begin position="313"/>
        <end position="322"/>
    </location>
</feature>
<feature type="compositionally biased region" description="Basic residues" evidence="2">
    <location>
        <begin position="332"/>
        <end position="341"/>
    </location>
</feature>
<feature type="compositionally biased region" description="Basic residues" evidence="2">
    <location>
        <begin position="360"/>
        <end position="370"/>
    </location>
</feature>
<feature type="helix" evidence="6">
    <location>
        <begin position="495"/>
        <end position="497"/>
    </location>
</feature>
<feature type="strand" evidence="6">
    <location>
        <begin position="500"/>
        <end position="507"/>
    </location>
</feature>
<feature type="strand" evidence="6">
    <location>
        <begin position="517"/>
        <end position="525"/>
    </location>
</feature>
<feature type="helix" evidence="6">
    <location>
        <begin position="526"/>
        <end position="528"/>
    </location>
</feature>
<feature type="strand" evidence="6">
    <location>
        <begin position="540"/>
        <end position="547"/>
    </location>
</feature>
<feature type="turn" evidence="6">
    <location>
        <begin position="548"/>
        <end position="550"/>
    </location>
</feature>
<feature type="strand" evidence="6">
    <location>
        <begin position="551"/>
        <end position="558"/>
    </location>
</feature>
<feature type="strand" evidence="6">
    <location>
        <begin position="563"/>
        <end position="568"/>
    </location>
</feature>
<feature type="strand" evidence="6">
    <location>
        <begin position="572"/>
        <end position="587"/>
    </location>
</feature>
<feature type="strand" evidence="6">
    <location>
        <begin position="590"/>
        <end position="595"/>
    </location>
</feature>
<feature type="strand" evidence="6">
    <location>
        <begin position="598"/>
        <end position="602"/>
    </location>
</feature>
<feature type="strand" evidence="6">
    <location>
        <begin position="607"/>
        <end position="612"/>
    </location>
</feature>
<feature type="strand" evidence="6">
    <location>
        <begin position="614"/>
        <end position="616"/>
    </location>
</feature>
<feature type="strand" evidence="6">
    <location>
        <begin position="618"/>
        <end position="626"/>
    </location>
</feature>
<feature type="helix" evidence="6">
    <location>
        <begin position="628"/>
        <end position="633"/>
    </location>
</feature>